<gene>
    <name evidence="1" type="primary">proS</name>
    <name type="ordered locus">COPRO5265_0746</name>
</gene>
<sequence length="558" mass="63058">MRASKFFYKTLREDPKDAEATSHKLLIRASMIKQIASGVYAFLPFGHKVLKKIETVVREEMDRIGGQEMTMSIMMPAEMWKKTGRWELYGDDMIKFKDRKEQDFCLGPTHEEQITTLAGQLISSYKQLPQLVYQIQTKFRDEPRPRFGLIRLREFVMKDAYSFHDSEESLKTTYDQVLNAYKRILERIGLNYEVVAADPGQIGGTLSHEFIVPAEVGESTVFKCDSCGYVATSEVATSVLPAPAFLEKPALEKVHTPDTSSIEDVAEFLQLSKERIIKAVMVIGDSRPYMILVRGDRELDESKMNRRFTQWRMMTDEEILSMGFIPGFVGPREGINEITILKDKSLESLDWGVIGANERDYHIVGVEVSELPFHEIVDLAEVAEGDLCPQCGSPLRSFTGLEVGHIFRLGTRYSEPLEAFYHSEDGERKPFIMGCYGIGVTRLVSAVIEQHHDDFGIVWPWSVAPYHVVIIPIGDVEAQVQELENTLSSAGLDVFVDDRDERPGVKFVDADLIGFPVRLVVNAKKEGKVEIKFRKTGETLLVGQEDVLDTVLRGAVNL</sequence>
<dbReference type="EC" id="6.1.1.15" evidence="1"/>
<dbReference type="EMBL" id="CP001145">
    <property type="protein sequence ID" value="ACI17509.1"/>
    <property type="molecule type" value="Genomic_DNA"/>
</dbReference>
<dbReference type="RefSeq" id="WP_012544161.1">
    <property type="nucleotide sequence ID" value="NC_011295.1"/>
</dbReference>
<dbReference type="SMR" id="B5Y8J7"/>
<dbReference type="STRING" id="309798.COPRO5265_0746"/>
<dbReference type="KEGG" id="cpo:COPRO5265_0746"/>
<dbReference type="eggNOG" id="COG0442">
    <property type="taxonomic scope" value="Bacteria"/>
</dbReference>
<dbReference type="HOGENOM" id="CLU_016739_0_0_9"/>
<dbReference type="OrthoDB" id="9809052at2"/>
<dbReference type="Proteomes" id="UP000001732">
    <property type="component" value="Chromosome"/>
</dbReference>
<dbReference type="GO" id="GO:0005829">
    <property type="term" value="C:cytosol"/>
    <property type="evidence" value="ECO:0007669"/>
    <property type="project" value="TreeGrafter"/>
</dbReference>
<dbReference type="GO" id="GO:0002161">
    <property type="term" value="F:aminoacyl-tRNA deacylase activity"/>
    <property type="evidence" value="ECO:0007669"/>
    <property type="project" value="InterPro"/>
</dbReference>
<dbReference type="GO" id="GO:0005524">
    <property type="term" value="F:ATP binding"/>
    <property type="evidence" value="ECO:0007669"/>
    <property type="project" value="UniProtKB-UniRule"/>
</dbReference>
<dbReference type="GO" id="GO:0004827">
    <property type="term" value="F:proline-tRNA ligase activity"/>
    <property type="evidence" value="ECO:0007669"/>
    <property type="project" value="UniProtKB-UniRule"/>
</dbReference>
<dbReference type="GO" id="GO:0006433">
    <property type="term" value="P:prolyl-tRNA aminoacylation"/>
    <property type="evidence" value="ECO:0007669"/>
    <property type="project" value="UniProtKB-UniRule"/>
</dbReference>
<dbReference type="CDD" id="cd04334">
    <property type="entry name" value="ProRS-INS"/>
    <property type="match status" value="1"/>
</dbReference>
<dbReference type="CDD" id="cd00861">
    <property type="entry name" value="ProRS_anticodon_short"/>
    <property type="match status" value="1"/>
</dbReference>
<dbReference type="CDD" id="cd00779">
    <property type="entry name" value="ProRS_core_prok"/>
    <property type="match status" value="1"/>
</dbReference>
<dbReference type="FunFam" id="3.30.930.10:FF:000066">
    <property type="entry name" value="Proline--tRNA ligase"/>
    <property type="match status" value="1"/>
</dbReference>
<dbReference type="Gene3D" id="3.40.50.800">
    <property type="entry name" value="Anticodon-binding domain"/>
    <property type="match status" value="1"/>
</dbReference>
<dbReference type="Gene3D" id="3.30.930.10">
    <property type="entry name" value="Bira Bifunctional Protein, Domain 2"/>
    <property type="match status" value="2"/>
</dbReference>
<dbReference type="HAMAP" id="MF_01569">
    <property type="entry name" value="Pro_tRNA_synth_type1"/>
    <property type="match status" value="1"/>
</dbReference>
<dbReference type="InterPro" id="IPR002314">
    <property type="entry name" value="aa-tRNA-synt_IIb"/>
</dbReference>
<dbReference type="InterPro" id="IPR006195">
    <property type="entry name" value="aa-tRNA-synth_II"/>
</dbReference>
<dbReference type="InterPro" id="IPR045864">
    <property type="entry name" value="aa-tRNA-synth_II/BPL/LPL"/>
</dbReference>
<dbReference type="InterPro" id="IPR004154">
    <property type="entry name" value="Anticodon-bd"/>
</dbReference>
<dbReference type="InterPro" id="IPR036621">
    <property type="entry name" value="Anticodon-bd_dom_sf"/>
</dbReference>
<dbReference type="InterPro" id="IPR002316">
    <property type="entry name" value="Pro-tRNA-ligase_IIa"/>
</dbReference>
<dbReference type="InterPro" id="IPR004500">
    <property type="entry name" value="Pro-tRNA-synth_IIa_bac-type"/>
</dbReference>
<dbReference type="InterPro" id="IPR023717">
    <property type="entry name" value="Pro-tRNA-Synthase_IIa_type1"/>
</dbReference>
<dbReference type="InterPro" id="IPR050062">
    <property type="entry name" value="Pro-tRNA_synthetase"/>
</dbReference>
<dbReference type="InterPro" id="IPR044140">
    <property type="entry name" value="ProRS_anticodon_short"/>
</dbReference>
<dbReference type="InterPro" id="IPR033730">
    <property type="entry name" value="ProRS_core_prok"/>
</dbReference>
<dbReference type="InterPro" id="IPR036754">
    <property type="entry name" value="YbaK/aa-tRNA-synt-asso_dom_sf"/>
</dbReference>
<dbReference type="InterPro" id="IPR007214">
    <property type="entry name" value="YbaK/aa-tRNA-synth-assoc-dom"/>
</dbReference>
<dbReference type="NCBIfam" id="NF006625">
    <property type="entry name" value="PRK09194.1"/>
    <property type="match status" value="1"/>
</dbReference>
<dbReference type="NCBIfam" id="TIGR00409">
    <property type="entry name" value="proS_fam_II"/>
    <property type="match status" value="1"/>
</dbReference>
<dbReference type="PANTHER" id="PTHR42753">
    <property type="entry name" value="MITOCHONDRIAL RIBOSOME PROTEIN L39/PROLYL-TRNA LIGASE FAMILY MEMBER"/>
    <property type="match status" value="1"/>
</dbReference>
<dbReference type="PANTHER" id="PTHR42753:SF2">
    <property type="entry name" value="PROLINE--TRNA LIGASE"/>
    <property type="match status" value="1"/>
</dbReference>
<dbReference type="Pfam" id="PF03129">
    <property type="entry name" value="HGTP_anticodon"/>
    <property type="match status" value="1"/>
</dbReference>
<dbReference type="Pfam" id="PF00587">
    <property type="entry name" value="tRNA-synt_2b"/>
    <property type="match status" value="1"/>
</dbReference>
<dbReference type="Pfam" id="PF04073">
    <property type="entry name" value="tRNA_edit"/>
    <property type="match status" value="1"/>
</dbReference>
<dbReference type="PRINTS" id="PR01046">
    <property type="entry name" value="TRNASYNTHPRO"/>
</dbReference>
<dbReference type="SUPFAM" id="SSF52954">
    <property type="entry name" value="Class II aaRS ABD-related"/>
    <property type="match status" value="1"/>
</dbReference>
<dbReference type="SUPFAM" id="SSF55681">
    <property type="entry name" value="Class II aaRS and biotin synthetases"/>
    <property type="match status" value="1"/>
</dbReference>
<dbReference type="SUPFAM" id="SSF55826">
    <property type="entry name" value="YbaK/ProRS associated domain"/>
    <property type="match status" value="1"/>
</dbReference>
<dbReference type="PROSITE" id="PS50862">
    <property type="entry name" value="AA_TRNA_LIGASE_II"/>
    <property type="match status" value="1"/>
</dbReference>
<feature type="chain" id="PRO_1000199367" description="Proline--tRNA ligase">
    <location>
        <begin position="1"/>
        <end position="558"/>
    </location>
</feature>
<proteinExistence type="inferred from homology"/>
<evidence type="ECO:0000255" key="1">
    <source>
        <dbReference type="HAMAP-Rule" id="MF_01569"/>
    </source>
</evidence>
<name>SYP_COPPD</name>
<keyword id="KW-0030">Aminoacyl-tRNA synthetase</keyword>
<keyword id="KW-0067">ATP-binding</keyword>
<keyword id="KW-0963">Cytoplasm</keyword>
<keyword id="KW-0436">Ligase</keyword>
<keyword id="KW-0547">Nucleotide-binding</keyword>
<keyword id="KW-0648">Protein biosynthesis</keyword>
<keyword id="KW-1185">Reference proteome</keyword>
<protein>
    <recommendedName>
        <fullName evidence="1">Proline--tRNA ligase</fullName>
        <ecNumber evidence="1">6.1.1.15</ecNumber>
    </recommendedName>
    <alternativeName>
        <fullName evidence="1">Prolyl-tRNA synthetase</fullName>
        <shortName evidence="1">ProRS</shortName>
    </alternativeName>
</protein>
<organism>
    <name type="scientific">Coprothermobacter proteolyticus (strain ATCC 35245 / DSM 5265 / OCM 4 / BT)</name>
    <dbReference type="NCBI Taxonomy" id="309798"/>
    <lineage>
        <taxon>Bacteria</taxon>
        <taxon>Pseudomonadati</taxon>
        <taxon>Coprothermobacterota</taxon>
        <taxon>Coprothermobacteria</taxon>
        <taxon>Coprothermobacterales</taxon>
        <taxon>Coprothermobacteraceae</taxon>
        <taxon>Coprothermobacter</taxon>
    </lineage>
</organism>
<comment type="function">
    <text evidence="1">Catalyzes the attachment of proline to tRNA(Pro) in a two-step reaction: proline is first activated by ATP to form Pro-AMP and then transferred to the acceptor end of tRNA(Pro). As ProRS can inadvertently accommodate and process non-cognate amino acids such as alanine and cysteine, to avoid such errors it has two additional distinct editing activities against alanine. One activity is designated as 'pretransfer' editing and involves the tRNA(Pro)-independent hydrolysis of activated Ala-AMP. The other activity is designated 'posttransfer' editing and involves deacylation of mischarged Ala-tRNA(Pro). The misacylated Cys-tRNA(Pro) is not edited by ProRS.</text>
</comment>
<comment type="catalytic activity">
    <reaction evidence="1">
        <text>tRNA(Pro) + L-proline + ATP = L-prolyl-tRNA(Pro) + AMP + diphosphate</text>
        <dbReference type="Rhea" id="RHEA:14305"/>
        <dbReference type="Rhea" id="RHEA-COMP:9700"/>
        <dbReference type="Rhea" id="RHEA-COMP:9702"/>
        <dbReference type="ChEBI" id="CHEBI:30616"/>
        <dbReference type="ChEBI" id="CHEBI:33019"/>
        <dbReference type="ChEBI" id="CHEBI:60039"/>
        <dbReference type="ChEBI" id="CHEBI:78442"/>
        <dbReference type="ChEBI" id="CHEBI:78532"/>
        <dbReference type="ChEBI" id="CHEBI:456215"/>
        <dbReference type="EC" id="6.1.1.15"/>
    </reaction>
</comment>
<comment type="subunit">
    <text evidence="1">Homodimer.</text>
</comment>
<comment type="subcellular location">
    <subcellularLocation>
        <location evidence="1">Cytoplasm</location>
    </subcellularLocation>
</comment>
<comment type="domain">
    <text evidence="1">Consists of three domains: the N-terminal catalytic domain, the editing domain and the C-terminal anticodon-binding domain.</text>
</comment>
<comment type="similarity">
    <text evidence="1">Belongs to the class-II aminoacyl-tRNA synthetase family. ProS type 1 subfamily.</text>
</comment>
<reference key="1">
    <citation type="submission" date="2008-08" db="EMBL/GenBank/DDBJ databases">
        <title>The complete genome sequence of Coprothermobacter proteolyticus strain ATCC 5245 / DSM 5265 / BT.</title>
        <authorList>
            <person name="Dodson R.J."/>
            <person name="Durkin A.S."/>
            <person name="Wu M."/>
            <person name="Eisen J."/>
            <person name="Sutton G."/>
        </authorList>
    </citation>
    <scope>NUCLEOTIDE SEQUENCE [LARGE SCALE GENOMIC DNA]</scope>
    <source>
        <strain>ATCC 35245 / DSM 5265 / OCM 4 / BT</strain>
    </source>
</reference>
<accession>B5Y8J7</accession>